<keyword id="KW-1185">Reference proteome</keyword>
<proteinExistence type="inferred from homology"/>
<accession>Q8FH05</accession>
<name>VES_ECOL6</name>
<reference key="1">
    <citation type="journal article" date="2002" name="Proc. Natl. Acad. Sci. U.S.A.">
        <title>Extensive mosaic structure revealed by the complete genome sequence of uropathogenic Escherichia coli.</title>
        <authorList>
            <person name="Welch R.A."/>
            <person name="Burland V."/>
            <person name="Plunkett G. III"/>
            <person name="Redford P."/>
            <person name="Roesch P."/>
            <person name="Rasko D."/>
            <person name="Buckles E.L."/>
            <person name="Liou S.-R."/>
            <person name="Boutin A."/>
            <person name="Hackett J."/>
            <person name="Stroud D."/>
            <person name="Mayhew G.F."/>
            <person name="Rose D.J."/>
            <person name="Zhou S."/>
            <person name="Schwartz D.C."/>
            <person name="Perna N.T."/>
            <person name="Mobley H.L.T."/>
            <person name="Donnenberg M.S."/>
            <person name="Blattner F.R."/>
        </authorList>
    </citation>
    <scope>NUCLEOTIDE SEQUENCE [LARGE SCALE GENOMIC DNA]</scope>
    <source>
        <strain>CFT073 / ATCC 700928 / UPEC</strain>
    </source>
</reference>
<organism>
    <name type="scientific">Escherichia coli O6:H1 (strain CFT073 / ATCC 700928 / UPEC)</name>
    <dbReference type="NCBI Taxonomy" id="199310"/>
    <lineage>
        <taxon>Bacteria</taxon>
        <taxon>Pseudomonadati</taxon>
        <taxon>Pseudomonadota</taxon>
        <taxon>Gammaproteobacteria</taxon>
        <taxon>Enterobacterales</taxon>
        <taxon>Enterobacteriaceae</taxon>
        <taxon>Escherichia</taxon>
    </lineage>
</organism>
<evidence type="ECO:0000255" key="1">
    <source>
        <dbReference type="HAMAP-Rule" id="MF_01591"/>
    </source>
</evidence>
<evidence type="ECO:0000305" key="2"/>
<sequence length="191" mass="21608">MEYFDMRKMSVNLWRNAAGETREICTFPPAKRDFYWRASITSIAANGEFSLFPGMERIVTLLEGGEMFLESADRFNHTLKPLQPFSFAADLVVKAKLTAGQMSMDFNIMTRLDVCKAKVRIAERTFTTFGSRGGVVFVINGAWQLGDKLLTTDQGACWFDGRHTLRLLQPQGKLLFSEINWLAGHSPDQVQ</sequence>
<dbReference type="EMBL" id="AE014075">
    <property type="protein sequence ID" value="AAN80600.1"/>
    <property type="status" value="ALT_INIT"/>
    <property type="molecule type" value="Genomic_DNA"/>
</dbReference>
<dbReference type="RefSeq" id="WP_000455604.1">
    <property type="nucleotide sequence ID" value="NZ_CP051263.1"/>
</dbReference>
<dbReference type="SMR" id="Q8FH05"/>
<dbReference type="STRING" id="199310.c2141"/>
<dbReference type="DNASU" id="1036563"/>
<dbReference type="KEGG" id="ecc:c2141"/>
<dbReference type="eggNOG" id="COG3758">
    <property type="taxonomic scope" value="Bacteria"/>
</dbReference>
<dbReference type="HOGENOM" id="CLU_090931_5_0_6"/>
<dbReference type="Proteomes" id="UP000001410">
    <property type="component" value="Chromosome"/>
</dbReference>
<dbReference type="CDD" id="cd20293">
    <property type="entry name" value="cupin_HutD_N"/>
    <property type="match status" value="1"/>
</dbReference>
<dbReference type="Gene3D" id="2.60.120.10">
    <property type="entry name" value="Jelly Rolls"/>
    <property type="match status" value="1"/>
</dbReference>
<dbReference type="HAMAP" id="MF_01591">
    <property type="entry name" value="Ves"/>
    <property type="match status" value="1"/>
</dbReference>
<dbReference type="InterPro" id="IPR014710">
    <property type="entry name" value="RmlC-like_jellyroll"/>
</dbReference>
<dbReference type="InterPro" id="IPR011051">
    <property type="entry name" value="RmlC_Cupin_sf"/>
</dbReference>
<dbReference type="InterPro" id="IPR010282">
    <property type="entry name" value="Uncharacterised_HutD/Ves"/>
</dbReference>
<dbReference type="InterPro" id="IPR023482">
    <property type="entry name" value="Uncharacterised_Ves"/>
</dbReference>
<dbReference type="NCBIfam" id="NF008488">
    <property type="entry name" value="PRK11396.1"/>
    <property type="match status" value="1"/>
</dbReference>
<dbReference type="PANTHER" id="PTHR37943">
    <property type="entry name" value="PROTEIN VES"/>
    <property type="match status" value="1"/>
</dbReference>
<dbReference type="PANTHER" id="PTHR37943:SF1">
    <property type="entry name" value="PROTEIN VES"/>
    <property type="match status" value="1"/>
</dbReference>
<dbReference type="Pfam" id="PF05962">
    <property type="entry name" value="HutD"/>
    <property type="match status" value="1"/>
</dbReference>
<dbReference type="SUPFAM" id="SSF51182">
    <property type="entry name" value="RmlC-like cupins"/>
    <property type="match status" value="1"/>
</dbReference>
<comment type="similarity">
    <text evidence="1">Belongs to the Ves family.</text>
</comment>
<comment type="sequence caution" evidence="2">
    <conflict type="erroneous initiation">
        <sequence resource="EMBL-CDS" id="AAN80600"/>
    </conflict>
</comment>
<gene>
    <name evidence="1" type="primary">ves</name>
    <name type="ordered locus">c2141</name>
</gene>
<protein>
    <recommendedName>
        <fullName evidence="1">Protein Ves</fullName>
    </recommendedName>
</protein>
<feature type="chain" id="PRO_0000315006" description="Protein Ves">
    <location>
        <begin position="1"/>
        <end position="191"/>
    </location>
</feature>